<feature type="chain" id="PRO_0000061768" description="Cytochrome b">
    <location>
        <begin position="1"/>
        <end position="385"/>
    </location>
</feature>
<feature type="transmembrane region" description="Helical" evidence="3">
    <location>
        <begin position="32"/>
        <end position="52"/>
    </location>
</feature>
<feature type="transmembrane region" description="Helical" evidence="3">
    <location>
        <begin position="76"/>
        <end position="98"/>
    </location>
</feature>
<feature type="transmembrane region" description="Helical" evidence="3">
    <location>
        <begin position="113"/>
        <end position="133"/>
    </location>
</feature>
<feature type="transmembrane region" description="Helical" evidence="3">
    <location>
        <begin position="179"/>
        <end position="199"/>
    </location>
</feature>
<feature type="transmembrane region" description="Helical" evidence="3">
    <location>
        <begin position="225"/>
        <end position="245"/>
    </location>
</feature>
<feature type="transmembrane region" description="Helical" evidence="3">
    <location>
        <begin position="289"/>
        <end position="309"/>
    </location>
</feature>
<feature type="transmembrane region" description="Helical" evidence="3">
    <location>
        <begin position="321"/>
        <end position="341"/>
    </location>
</feature>
<feature type="transmembrane region" description="Helical" evidence="3">
    <location>
        <begin position="348"/>
        <end position="368"/>
    </location>
</feature>
<feature type="binding site" description="axial binding residue" evidence="5">
    <location>
        <position position="82"/>
    </location>
    <ligand>
        <name>heme b</name>
        <dbReference type="ChEBI" id="CHEBI:60344"/>
        <label>b562</label>
    </ligand>
    <ligandPart>
        <name>Fe</name>
        <dbReference type="ChEBI" id="CHEBI:18248"/>
    </ligandPart>
</feature>
<feature type="binding site" description="axial binding residue" evidence="5">
    <location>
        <position position="96"/>
    </location>
    <ligand>
        <name>heme b</name>
        <dbReference type="ChEBI" id="CHEBI:60344"/>
        <label>b566</label>
    </ligand>
    <ligandPart>
        <name>Fe</name>
        <dbReference type="ChEBI" id="CHEBI:18248"/>
    </ligandPart>
</feature>
<feature type="binding site" description="axial binding residue" evidence="5">
    <location>
        <position position="183"/>
    </location>
    <ligand>
        <name>heme b</name>
        <dbReference type="ChEBI" id="CHEBI:60344"/>
        <label>b562</label>
    </ligand>
    <ligandPart>
        <name>Fe</name>
        <dbReference type="ChEBI" id="CHEBI:18248"/>
    </ligandPart>
</feature>
<feature type="binding site" description="axial binding residue" evidence="5">
    <location>
        <position position="197"/>
    </location>
    <ligand>
        <name>heme b</name>
        <dbReference type="ChEBI" id="CHEBI:60344"/>
        <label>b566</label>
    </ligand>
    <ligandPart>
        <name>Fe</name>
        <dbReference type="ChEBI" id="CHEBI:18248"/>
    </ligandPart>
</feature>
<feature type="binding site" evidence="2">
    <location>
        <position position="202"/>
    </location>
    <ligand>
        <name>a ubiquinone</name>
        <dbReference type="ChEBI" id="CHEBI:16389"/>
    </ligand>
</feature>
<feature type="helix" evidence="6">
    <location>
        <begin position="3"/>
        <end position="6"/>
    </location>
</feature>
<feature type="helix" evidence="6">
    <location>
        <begin position="8"/>
        <end position="17"/>
    </location>
</feature>
<feature type="strand" evidence="6">
    <location>
        <begin position="21"/>
        <end position="23"/>
    </location>
</feature>
<feature type="helix" evidence="6">
    <location>
        <begin position="28"/>
        <end position="31"/>
    </location>
</feature>
<feature type="helix" evidence="6">
    <location>
        <begin position="32"/>
        <end position="51"/>
    </location>
</feature>
<feature type="turn" evidence="6">
    <location>
        <begin position="58"/>
        <end position="60"/>
    </location>
</feature>
<feature type="helix" evidence="6">
    <location>
        <begin position="61"/>
        <end position="70"/>
    </location>
</feature>
<feature type="helix" evidence="6">
    <location>
        <begin position="75"/>
        <end position="102"/>
    </location>
</feature>
<feature type="turn" evidence="6">
    <location>
        <begin position="103"/>
        <end position="106"/>
    </location>
</feature>
<feature type="helix" evidence="6">
    <location>
        <begin position="111"/>
        <end position="133"/>
    </location>
</feature>
<feature type="helix" evidence="6">
    <location>
        <begin position="138"/>
        <end position="148"/>
    </location>
</feature>
<feature type="helix" evidence="6">
    <location>
        <begin position="149"/>
        <end position="153"/>
    </location>
</feature>
<feature type="turn" evidence="6">
    <location>
        <begin position="155"/>
        <end position="157"/>
    </location>
</feature>
<feature type="helix" evidence="6">
    <location>
        <begin position="158"/>
        <end position="166"/>
    </location>
</feature>
<feature type="strand" evidence="6">
    <location>
        <begin position="168"/>
        <end position="172"/>
    </location>
</feature>
<feature type="helix" evidence="6">
    <location>
        <begin position="173"/>
        <end position="201"/>
    </location>
</feature>
<feature type="turn" evidence="6">
    <location>
        <begin position="202"/>
        <end position="204"/>
    </location>
</feature>
<feature type="strand" evidence="6">
    <location>
        <begin position="217"/>
        <end position="220"/>
    </location>
</feature>
<feature type="helix" evidence="6">
    <location>
        <begin position="221"/>
        <end position="246"/>
    </location>
</feature>
<feature type="turn" evidence="6">
    <location>
        <begin position="248"/>
        <end position="251"/>
    </location>
</feature>
<feature type="helix" evidence="6">
    <location>
        <begin position="254"/>
        <end position="257"/>
    </location>
</feature>
<feature type="strand" evidence="6">
    <location>
        <begin position="262"/>
        <end position="264"/>
    </location>
</feature>
<feature type="helix" evidence="6">
    <location>
        <begin position="273"/>
        <end position="275"/>
    </location>
</feature>
<feature type="helix" evidence="6">
    <location>
        <begin position="276"/>
        <end position="284"/>
    </location>
</feature>
<feature type="strand" evidence="6">
    <location>
        <begin position="285"/>
        <end position="287"/>
    </location>
</feature>
<feature type="helix" evidence="6">
    <location>
        <begin position="288"/>
        <end position="300"/>
    </location>
</feature>
<feature type="helix" evidence="6">
    <location>
        <begin position="301"/>
        <end position="304"/>
    </location>
</feature>
<feature type="helix" evidence="6">
    <location>
        <begin position="305"/>
        <end position="308"/>
    </location>
</feature>
<feature type="helix" evidence="6">
    <location>
        <begin position="320"/>
        <end position="339"/>
    </location>
</feature>
<feature type="helix" evidence="6">
    <location>
        <begin position="348"/>
        <end position="364"/>
    </location>
</feature>
<feature type="helix" evidence="6">
    <location>
        <begin position="366"/>
        <end position="382"/>
    </location>
</feature>
<geneLocation type="mitochondrion"/>
<gene>
    <name type="primary">COB</name>
    <name type="synonym">CYTB</name>
</gene>
<sequence>MALRKKNSLLNMANSYVLDSPQPSNLNYFWNFGSLLALCLVIQLATGITLAMHYTSHASLAFDSVEHIMRDVNFGWFIRYAHANTASFFFICIYAHMGRNIYYGSYKTPRVLPWSIGVIIFLLLIITAFMGYVLVFGQMSLWGATVICNLVSAIPWLGEDIVHFLWGGFSVGNPTLQRFFALHYLMPFVLAVFALLHLIALHTAGSSNPLGITSNVDKLSMHPYYSFKDLITVFAFLLMFTLFVFFSPDKLGHPDNYIPANPMVTPASIVPEWYLLPFYAILRAIPDKLGGVIAMVAAILILLILPIVDRSIIRGNAFKPISKLLFGFFICNFLLLGVLGQVHIEPPFIVLGQICTIFYFSYFLILLPMVSTIENIFFYIGSLRK</sequence>
<name>CYB_YARLI</name>
<comment type="function">
    <text evidence="3">Component of the ubiquinol-cytochrome c reductase complex (complex III or cytochrome b-c1 complex) that is part of the mitochondrial respiratory chain. The b-c1 complex mediates electron transfer from ubiquinol to cytochrome c. Contributes to the generation of a proton gradient across the mitochondrial membrane that is then used for ATP synthesis.</text>
</comment>
<comment type="cofactor">
    <cofactor evidence="3">
        <name>heme b</name>
        <dbReference type="ChEBI" id="CHEBI:60344"/>
    </cofactor>
    <text evidence="3">Binds 2 heme b groups non-covalently.</text>
</comment>
<comment type="subunit">
    <text evidence="3">Fungal cytochrome b-c1 complex contains 10 subunits; 3 respiratory subunits, 2 core proteins and 5 low-molecular weight proteins. Cytochrome b-c1 complex is a homodimer.</text>
</comment>
<comment type="subcellular location">
    <subcellularLocation>
        <location evidence="3">Mitochondrion inner membrane</location>
        <topology evidence="3">Multi-pass membrane protein</topology>
    </subcellularLocation>
</comment>
<comment type="miscellaneous">
    <text evidence="1">Heme 1 (or BL or b562) is low-potential and absorbs at about 562 nm, and heme 2 (or BH or b566) is high-potential and absorbs at about 566 nm.</text>
</comment>
<comment type="similarity">
    <text evidence="4 5">Belongs to the cytochrome b family.</text>
</comment>
<comment type="caution">
    <text evidence="3">The protein contains only eight transmembrane helices, not nine as predicted by bioinformatics tools.</text>
</comment>
<protein>
    <recommendedName>
        <fullName>Cytochrome b</fullName>
    </recommendedName>
    <alternativeName>
        <fullName>Complex III subunit 3</fullName>
    </alternativeName>
    <alternativeName>
        <fullName>Complex III subunit III</fullName>
    </alternativeName>
    <alternativeName>
        <fullName>Cytochrome b-c1 complex subunit 3</fullName>
    </alternativeName>
    <alternativeName>
        <fullName>Ubiquinol-cytochrome-c reductase complex cytochrome b subunit</fullName>
    </alternativeName>
</protein>
<accession>Q9B6D0</accession>
<evidence type="ECO:0000250" key="1"/>
<evidence type="ECO:0000250" key="2">
    <source>
        <dbReference type="UniProtKB" id="P00157"/>
    </source>
</evidence>
<evidence type="ECO:0000250" key="3">
    <source>
        <dbReference type="UniProtKB" id="P00163"/>
    </source>
</evidence>
<evidence type="ECO:0000255" key="4">
    <source>
        <dbReference type="PROSITE-ProRule" id="PRU00967"/>
    </source>
</evidence>
<evidence type="ECO:0000255" key="5">
    <source>
        <dbReference type="PROSITE-ProRule" id="PRU00968"/>
    </source>
</evidence>
<evidence type="ECO:0007829" key="6">
    <source>
        <dbReference type="PDB" id="8AB6"/>
    </source>
</evidence>
<proteinExistence type="evidence at protein level"/>
<dbReference type="EMBL" id="AJ307410">
    <property type="protein sequence ID" value="CAC28111.2"/>
    <property type="molecule type" value="Genomic_DNA"/>
</dbReference>
<dbReference type="RefSeq" id="NP_075443.2">
    <property type="nucleotide sequence ID" value="NC_002659.1"/>
</dbReference>
<dbReference type="PDB" id="8AB6">
    <property type="method" value="EM"/>
    <property type="resolution" value="2.00 A"/>
    <property type="chains" value="C/N=1-385"/>
</dbReference>
<dbReference type="PDB" id="8AB7">
    <property type="method" value="EM"/>
    <property type="resolution" value="3.30 A"/>
    <property type="chains" value="C/N=1-385"/>
</dbReference>
<dbReference type="PDB" id="8AB8">
    <property type="method" value="EM"/>
    <property type="resolution" value="2.60 A"/>
    <property type="chains" value="C/N=1-385"/>
</dbReference>
<dbReference type="PDB" id="8AB9">
    <property type="method" value="EM"/>
    <property type="resolution" value="3.30 A"/>
    <property type="chains" value="C/N=1-385"/>
</dbReference>
<dbReference type="PDB" id="8ABA">
    <property type="method" value="EM"/>
    <property type="resolution" value="3.20 A"/>
    <property type="chains" value="C/N=1-385"/>
</dbReference>
<dbReference type="PDB" id="8ABB">
    <property type="method" value="EM"/>
    <property type="resolution" value="3.20 A"/>
    <property type="chains" value="C/N=1-385"/>
</dbReference>
<dbReference type="PDB" id="8ABE">
    <property type="method" value="EM"/>
    <property type="resolution" value="2.30 A"/>
    <property type="chains" value="C/N=1-385"/>
</dbReference>
<dbReference type="PDB" id="8ABF">
    <property type="method" value="EM"/>
    <property type="resolution" value="2.30 A"/>
    <property type="chains" value="C/N=1-385"/>
</dbReference>
<dbReference type="PDB" id="8ABG">
    <property type="method" value="EM"/>
    <property type="resolution" value="2.30 A"/>
    <property type="chains" value="C/N=1-385"/>
</dbReference>
<dbReference type="PDB" id="8ABH">
    <property type="method" value="EM"/>
    <property type="resolution" value="3.00 A"/>
    <property type="chains" value="C/N=1-385"/>
</dbReference>
<dbReference type="PDB" id="8ABI">
    <property type="method" value="EM"/>
    <property type="resolution" value="3.00 A"/>
    <property type="chains" value="C/N=1-385"/>
</dbReference>
<dbReference type="PDB" id="8ABJ">
    <property type="method" value="EM"/>
    <property type="resolution" value="3.70 A"/>
    <property type="chains" value="C/N=1-385"/>
</dbReference>
<dbReference type="PDB" id="8ABK">
    <property type="method" value="EM"/>
    <property type="resolution" value="2.50 A"/>
    <property type="chains" value="C/N=1-385"/>
</dbReference>
<dbReference type="PDB" id="8ABL">
    <property type="method" value="EM"/>
    <property type="resolution" value="2.10 A"/>
    <property type="chains" value="C/N=1-385"/>
</dbReference>
<dbReference type="PDB" id="8ABM">
    <property type="method" value="EM"/>
    <property type="resolution" value="2.80 A"/>
    <property type="chains" value="C/N=1-385"/>
</dbReference>
<dbReference type="PDB" id="8AC3">
    <property type="method" value="EM"/>
    <property type="resolution" value="2.80 A"/>
    <property type="chains" value="C/N=1-385"/>
</dbReference>
<dbReference type="PDB" id="8AC4">
    <property type="method" value="EM"/>
    <property type="resolution" value="2.70 A"/>
    <property type="chains" value="C/N=1-385"/>
</dbReference>
<dbReference type="PDB" id="8AC5">
    <property type="method" value="EM"/>
    <property type="resolution" value="3.10 A"/>
    <property type="chains" value="C/N=1-385"/>
</dbReference>
<dbReference type="PDBsum" id="8AB6"/>
<dbReference type="PDBsum" id="8AB7"/>
<dbReference type="PDBsum" id="8AB8"/>
<dbReference type="PDBsum" id="8AB9"/>
<dbReference type="PDBsum" id="8ABA"/>
<dbReference type="PDBsum" id="8ABB"/>
<dbReference type="PDBsum" id="8ABE"/>
<dbReference type="PDBsum" id="8ABF"/>
<dbReference type="PDBsum" id="8ABG"/>
<dbReference type="PDBsum" id="8ABH"/>
<dbReference type="PDBsum" id="8ABI"/>
<dbReference type="PDBsum" id="8ABJ"/>
<dbReference type="PDBsum" id="8ABK"/>
<dbReference type="PDBsum" id="8ABL"/>
<dbReference type="PDBsum" id="8ABM"/>
<dbReference type="PDBsum" id="8AC3"/>
<dbReference type="PDBsum" id="8AC4"/>
<dbReference type="PDBsum" id="8AC5"/>
<dbReference type="EMDB" id="EMD-15312"/>
<dbReference type="EMDB" id="EMD-15313"/>
<dbReference type="EMDB" id="EMD-15314"/>
<dbReference type="EMDB" id="EMD-15315"/>
<dbReference type="EMDB" id="EMD-15316"/>
<dbReference type="EMDB" id="EMD-15317"/>
<dbReference type="EMDB" id="EMD-15318"/>
<dbReference type="EMDB" id="EMD-15319"/>
<dbReference type="EMDB" id="EMD-15320"/>
<dbReference type="EMDB" id="EMD-15321"/>
<dbReference type="EMDB" id="EMD-15322"/>
<dbReference type="EMDB" id="EMD-15323"/>
<dbReference type="EMDB" id="EMD-15324"/>
<dbReference type="EMDB" id="EMD-15325"/>
<dbReference type="EMDB" id="EMD-15326"/>
<dbReference type="EMDB" id="EMD-15332"/>
<dbReference type="EMDB" id="EMD-15333"/>
<dbReference type="EMDB" id="EMD-15334"/>
<dbReference type="SMR" id="Q9B6D0"/>
<dbReference type="FunCoup" id="Q9B6D0">
    <property type="interactions" value="664"/>
</dbReference>
<dbReference type="STRING" id="284591.Q9B6D0"/>
<dbReference type="GeneID" id="802619"/>
<dbReference type="KEGG" id="yli:802619"/>
<dbReference type="InParanoid" id="Q9B6D0"/>
<dbReference type="Proteomes" id="UP000001300">
    <property type="component" value="Mitochondrion"/>
</dbReference>
<dbReference type="GO" id="GO:0016020">
    <property type="term" value="C:membrane"/>
    <property type="evidence" value="ECO:0000318"/>
    <property type="project" value="GO_Central"/>
</dbReference>
<dbReference type="GO" id="GO:0005743">
    <property type="term" value="C:mitochondrial inner membrane"/>
    <property type="evidence" value="ECO:0007669"/>
    <property type="project" value="UniProtKB-SubCell"/>
</dbReference>
<dbReference type="GO" id="GO:0045275">
    <property type="term" value="C:respiratory chain complex III"/>
    <property type="evidence" value="ECO:0000318"/>
    <property type="project" value="GO_Central"/>
</dbReference>
<dbReference type="GO" id="GO:0046872">
    <property type="term" value="F:metal ion binding"/>
    <property type="evidence" value="ECO:0007669"/>
    <property type="project" value="UniProtKB-KW"/>
</dbReference>
<dbReference type="GO" id="GO:0008121">
    <property type="term" value="F:ubiquinol-cytochrome-c reductase activity"/>
    <property type="evidence" value="ECO:0007669"/>
    <property type="project" value="InterPro"/>
</dbReference>
<dbReference type="GO" id="GO:0006122">
    <property type="term" value="P:mitochondrial electron transport, ubiquinol to cytochrome c"/>
    <property type="evidence" value="ECO:0000318"/>
    <property type="project" value="GO_Central"/>
</dbReference>
<dbReference type="CDD" id="cd00290">
    <property type="entry name" value="cytochrome_b_C"/>
    <property type="match status" value="1"/>
</dbReference>
<dbReference type="CDD" id="cd00284">
    <property type="entry name" value="Cytochrome_b_N"/>
    <property type="match status" value="1"/>
</dbReference>
<dbReference type="FunFam" id="1.20.810.10:FF:000002">
    <property type="entry name" value="Cytochrome b"/>
    <property type="match status" value="1"/>
</dbReference>
<dbReference type="Gene3D" id="1.20.810.10">
    <property type="entry name" value="Cytochrome Bc1 Complex, Chain C"/>
    <property type="match status" value="1"/>
</dbReference>
<dbReference type="InterPro" id="IPR005798">
    <property type="entry name" value="Cyt_b/b6_C"/>
</dbReference>
<dbReference type="InterPro" id="IPR036150">
    <property type="entry name" value="Cyt_b/b6_C_sf"/>
</dbReference>
<dbReference type="InterPro" id="IPR005797">
    <property type="entry name" value="Cyt_b/b6_N"/>
</dbReference>
<dbReference type="InterPro" id="IPR027387">
    <property type="entry name" value="Cytb/b6-like_sf"/>
</dbReference>
<dbReference type="InterPro" id="IPR030689">
    <property type="entry name" value="Cytochrome_b"/>
</dbReference>
<dbReference type="InterPro" id="IPR048260">
    <property type="entry name" value="Cytochrome_b_C_euk/bac"/>
</dbReference>
<dbReference type="InterPro" id="IPR048259">
    <property type="entry name" value="Cytochrome_b_N_euk/bac"/>
</dbReference>
<dbReference type="InterPro" id="IPR016174">
    <property type="entry name" value="Di-haem_cyt_TM"/>
</dbReference>
<dbReference type="PANTHER" id="PTHR19271">
    <property type="entry name" value="CYTOCHROME B"/>
    <property type="match status" value="1"/>
</dbReference>
<dbReference type="PANTHER" id="PTHR19271:SF16">
    <property type="entry name" value="CYTOCHROME B"/>
    <property type="match status" value="1"/>
</dbReference>
<dbReference type="Pfam" id="PF00032">
    <property type="entry name" value="Cytochrom_B_C"/>
    <property type="match status" value="1"/>
</dbReference>
<dbReference type="Pfam" id="PF00033">
    <property type="entry name" value="Cytochrome_B"/>
    <property type="match status" value="1"/>
</dbReference>
<dbReference type="PIRSF" id="PIRSF038885">
    <property type="entry name" value="COB"/>
    <property type="match status" value="1"/>
</dbReference>
<dbReference type="SUPFAM" id="SSF81648">
    <property type="entry name" value="a domain/subunit of cytochrome bc1 complex (Ubiquinol-cytochrome c reductase)"/>
    <property type="match status" value="1"/>
</dbReference>
<dbReference type="SUPFAM" id="SSF81342">
    <property type="entry name" value="Transmembrane di-heme cytochromes"/>
    <property type="match status" value="1"/>
</dbReference>
<dbReference type="PROSITE" id="PS51003">
    <property type="entry name" value="CYTB_CTER"/>
    <property type="match status" value="1"/>
</dbReference>
<dbReference type="PROSITE" id="PS51002">
    <property type="entry name" value="CYTB_NTER"/>
    <property type="match status" value="1"/>
</dbReference>
<keyword id="KW-0002">3D-structure</keyword>
<keyword id="KW-0249">Electron transport</keyword>
<keyword id="KW-0349">Heme</keyword>
<keyword id="KW-0408">Iron</keyword>
<keyword id="KW-0472">Membrane</keyword>
<keyword id="KW-0479">Metal-binding</keyword>
<keyword id="KW-0496">Mitochondrion</keyword>
<keyword id="KW-0999">Mitochondrion inner membrane</keyword>
<keyword id="KW-1185">Reference proteome</keyword>
<keyword id="KW-0679">Respiratory chain</keyword>
<keyword id="KW-0812">Transmembrane</keyword>
<keyword id="KW-1133">Transmembrane helix</keyword>
<keyword id="KW-0813">Transport</keyword>
<keyword id="KW-0830">Ubiquinone</keyword>
<reference key="1">
    <citation type="journal article" date="2001" name="Comp. Funct. Genomics">
        <title>The complete mitochondrial genome of Yarrowia lipolytica.</title>
        <authorList>
            <person name="Kerscher S."/>
            <person name="Durstewitz G."/>
            <person name="Casaregola S."/>
            <person name="Gaillardin C."/>
            <person name="Brandt U."/>
        </authorList>
    </citation>
    <scope>NUCLEOTIDE SEQUENCE [LARGE SCALE GENOMIC DNA]</scope>
    <source>
        <strain>ATCC 20460 / W29 / CBS 7504 / IFP29</strain>
    </source>
</reference>
<organism>
    <name type="scientific">Yarrowia lipolytica (strain CLIB 122 / E 150)</name>
    <name type="common">Yeast</name>
    <name type="synonym">Candida lipolytica</name>
    <dbReference type="NCBI Taxonomy" id="284591"/>
    <lineage>
        <taxon>Eukaryota</taxon>
        <taxon>Fungi</taxon>
        <taxon>Dikarya</taxon>
        <taxon>Ascomycota</taxon>
        <taxon>Saccharomycotina</taxon>
        <taxon>Dipodascomycetes</taxon>
        <taxon>Dipodascales</taxon>
        <taxon>Dipodascales incertae sedis</taxon>
        <taxon>Yarrowia</taxon>
    </lineage>
</organism>